<reference key="1">
    <citation type="journal article" date="2008" name="J. Bacteriol.">
        <title>Insights into the environmental resistance gene pool from the genome sequence of the multidrug-resistant environmental isolate Escherichia coli SMS-3-5.</title>
        <authorList>
            <person name="Fricke W.F."/>
            <person name="Wright M.S."/>
            <person name="Lindell A.H."/>
            <person name="Harkins D.M."/>
            <person name="Baker-Austin C."/>
            <person name="Ravel J."/>
            <person name="Stepanauskas R."/>
        </authorList>
    </citation>
    <scope>NUCLEOTIDE SEQUENCE [LARGE SCALE GENOMIC DNA]</scope>
    <source>
        <strain>SMS-3-5 / SECEC</strain>
    </source>
</reference>
<feature type="chain" id="PRO_0000341309" description="Anaerobic nitric oxide reductase flavorubredoxin">
    <location>
        <begin position="1"/>
        <end position="479"/>
    </location>
</feature>
<feature type="domain" description="Flavodoxin-like" evidence="1">
    <location>
        <begin position="254"/>
        <end position="393"/>
    </location>
</feature>
<feature type="domain" description="Rubredoxin-like" evidence="1">
    <location>
        <begin position="423"/>
        <end position="474"/>
    </location>
</feature>
<feature type="region of interest" description="Zinc metallo-hydrolase">
    <location>
        <begin position="30"/>
        <end position="210"/>
    </location>
</feature>
<feature type="binding site" evidence="1">
    <location>
        <position position="79"/>
    </location>
    <ligand>
        <name>Fe cation</name>
        <dbReference type="ChEBI" id="CHEBI:24875"/>
        <label>1</label>
    </ligand>
</feature>
<feature type="binding site" evidence="1">
    <location>
        <position position="81"/>
    </location>
    <ligand>
        <name>Fe cation</name>
        <dbReference type="ChEBI" id="CHEBI:24875"/>
        <label>1</label>
    </ligand>
</feature>
<feature type="binding site" evidence="1">
    <location>
        <position position="83"/>
    </location>
    <ligand>
        <name>Fe cation</name>
        <dbReference type="ChEBI" id="CHEBI:24875"/>
        <label>2</label>
    </ligand>
</feature>
<feature type="binding site" evidence="1">
    <location>
        <position position="147"/>
    </location>
    <ligand>
        <name>Fe cation</name>
        <dbReference type="ChEBI" id="CHEBI:24875"/>
        <label>1</label>
    </ligand>
</feature>
<feature type="binding site" evidence="1">
    <location>
        <position position="166"/>
    </location>
    <ligand>
        <name>Fe cation</name>
        <dbReference type="ChEBI" id="CHEBI:24875"/>
        <label>1</label>
    </ligand>
</feature>
<feature type="binding site" evidence="1">
    <location>
        <position position="166"/>
    </location>
    <ligand>
        <name>Fe cation</name>
        <dbReference type="ChEBI" id="CHEBI:24875"/>
        <label>2</label>
    </ligand>
</feature>
<feature type="binding site" evidence="1">
    <location>
        <position position="227"/>
    </location>
    <ligand>
        <name>Fe cation</name>
        <dbReference type="ChEBI" id="CHEBI:24875"/>
        <label>2</label>
    </ligand>
</feature>
<feature type="binding site" evidence="1">
    <location>
        <begin position="260"/>
        <end position="264"/>
    </location>
    <ligand>
        <name>FMN</name>
        <dbReference type="ChEBI" id="CHEBI:58210"/>
    </ligand>
</feature>
<feature type="binding site" evidence="1">
    <location>
        <begin position="342"/>
        <end position="369"/>
    </location>
    <ligand>
        <name>FMN</name>
        <dbReference type="ChEBI" id="CHEBI:58210"/>
    </ligand>
</feature>
<feature type="binding site" evidence="1">
    <location>
        <position position="428"/>
    </location>
    <ligand>
        <name>Fe cation</name>
        <dbReference type="ChEBI" id="CHEBI:24875"/>
        <label>3</label>
    </ligand>
</feature>
<feature type="binding site" evidence="1">
    <location>
        <position position="431"/>
    </location>
    <ligand>
        <name>Fe cation</name>
        <dbReference type="ChEBI" id="CHEBI:24875"/>
        <label>3</label>
    </ligand>
</feature>
<feature type="binding site" evidence="1">
    <location>
        <position position="461"/>
    </location>
    <ligand>
        <name>Fe cation</name>
        <dbReference type="ChEBI" id="CHEBI:24875"/>
        <label>3</label>
    </ligand>
</feature>
<feature type="binding site" evidence="1">
    <location>
        <position position="464"/>
    </location>
    <ligand>
        <name>Fe cation</name>
        <dbReference type="ChEBI" id="CHEBI:24875"/>
        <label>3</label>
    </ligand>
</feature>
<sequence length="479" mass="54253">MSIVVKNNIHWVGQRDWEVRDFHGTEYKTLRGSSYNSYLIREEKNVLIDTVDHKFSREFVQNLRNEIDLADIDYIVINHAEEDHAGALTELMAQIPDTPIYCTANAIDSINGHHHHPEWNFNVVKTGDTLDIGNGKQLIFVETPMLHWPDSMMTYLTGDAVLFSNDAFGQHYCDEHLFNDEVDQTELFEQCQRYYANILTPFSRLVTPKITEILGFNLPVDMIATSHGVVWRDNPTQIVELYLKWAADYQEDRITIFYDTMSNNTRMMADAIAQGIAETDPRVAVKIFNVARSDKNEILTNVFRSKGMLVGTSTMNNVMMPKIAGLVEEMTGLRFRNKRASAFGSHGWSGGAVDRLSTRLQDAGFEMSLSLKAKWRPDQDALELCREHGREIARQWALAPLPQSTVNTVVKEETSATTTADLGPRMQCSVCQWIYDPAKGEPMQDVAPGTPWSEVPDNFLCPECSLGKDVFDELASEAK</sequence>
<keyword id="KW-0963">Cytoplasm</keyword>
<keyword id="KW-0249">Electron transport</keyword>
<keyword id="KW-0285">Flavoprotein</keyword>
<keyword id="KW-0288">FMN</keyword>
<keyword id="KW-0408">Iron</keyword>
<keyword id="KW-0479">Metal-binding</keyword>
<keyword id="KW-0560">Oxidoreductase</keyword>
<keyword id="KW-0813">Transport</keyword>
<comment type="function">
    <text evidence="1">Anaerobic nitric oxide reductase; uses NADH to detoxify nitric oxide (NO), protecting several 4Fe-4S NO-sensitive enzymes. Has at least 2 reductase partners, only one of which (NorW, flavorubredoxin reductase) has been identified. NO probably binds to the di-iron center; electrons enter from the NorW at rubredoxin and are transferred sequentially to the FMN center and the di-iron center. Also able to function as an aerobic oxygen reductase.</text>
</comment>
<comment type="cofactor">
    <cofactor evidence="1">
        <name>Fe cation</name>
        <dbReference type="ChEBI" id="CHEBI:24875"/>
    </cofactor>
    <text evidence="1">Binds 3 Fe cations per monomer.</text>
</comment>
<comment type="cofactor">
    <cofactor evidence="1">
        <name>FMN</name>
        <dbReference type="ChEBI" id="CHEBI:58210"/>
    </cofactor>
    <text evidence="1">Binds 1 FMN per monomer.</text>
</comment>
<comment type="pathway">
    <text evidence="1">Nitrogen metabolism; nitric oxide reduction.</text>
</comment>
<comment type="subunit">
    <text evidence="1">Homotetramer.</text>
</comment>
<comment type="subcellular location">
    <subcellularLocation>
        <location evidence="1">Cytoplasm</location>
    </subcellularLocation>
</comment>
<comment type="similarity">
    <text evidence="1">In the N-terminal section; belongs to the zinc metallo-hydrolase group 3 family.</text>
</comment>
<evidence type="ECO:0000255" key="1">
    <source>
        <dbReference type="HAMAP-Rule" id="MF_01312"/>
    </source>
</evidence>
<proteinExistence type="inferred from homology"/>
<dbReference type="EMBL" id="CP000970">
    <property type="protein sequence ID" value="ACB15538.1"/>
    <property type="molecule type" value="Genomic_DNA"/>
</dbReference>
<dbReference type="RefSeq" id="WP_000029604.1">
    <property type="nucleotide sequence ID" value="NC_010498.1"/>
</dbReference>
<dbReference type="BMRB" id="B1LQ28"/>
<dbReference type="SMR" id="B1LQ28"/>
<dbReference type="KEGG" id="ecm:EcSMS35_2833"/>
<dbReference type="HOGENOM" id="CLU_017490_0_1_6"/>
<dbReference type="UniPathway" id="UPA00638"/>
<dbReference type="Proteomes" id="UP000007011">
    <property type="component" value="Chromosome"/>
</dbReference>
<dbReference type="GO" id="GO:0005737">
    <property type="term" value="C:cytoplasm"/>
    <property type="evidence" value="ECO:0007669"/>
    <property type="project" value="UniProtKB-SubCell"/>
</dbReference>
<dbReference type="GO" id="GO:0009055">
    <property type="term" value="F:electron transfer activity"/>
    <property type="evidence" value="ECO:0007669"/>
    <property type="project" value="UniProtKB-UniRule"/>
</dbReference>
<dbReference type="GO" id="GO:0010181">
    <property type="term" value="F:FMN binding"/>
    <property type="evidence" value="ECO:0007669"/>
    <property type="project" value="InterPro"/>
</dbReference>
<dbReference type="GO" id="GO:0005506">
    <property type="term" value="F:iron ion binding"/>
    <property type="evidence" value="ECO:0007669"/>
    <property type="project" value="InterPro"/>
</dbReference>
<dbReference type="GO" id="GO:0016966">
    <property type="term" value="F:nitric oxide reductase activity"/>
    <property type="evidence" value="ECO:0007669"/>
    <property type="project" value="InterPro"/>
</dbReference>
<dbReference type="CDD" id="cd07709">
    <property type="entry name" value="flavodiiron_proteins_MBL-fold"/>
    <property type="match status" value="1"/>
</dbReference>
<dbReference type="CDD" id="cd00730">
    <property type="entry name" value="rubredoxin"/>
    <property type="match status" value="1"/>
</dbReference>
<dbReference type="FunFam" id="2.20.28.10:FF:000010">
    <property type="entry name" value="Anaerobic nitric oxide reductase flavorubredoxin"/>
    <property type="match status" value="1"/>
</dbReference>
<dbReference type="FunFam" id="3.40.50.360:FF:000012">
    <property type="entry name" value="Anaerobic nitric oxide reductase flavorubredoxin"/>
    <property type="match status" value="1"/>
</dbReference>
<dbReference type="FunFam" id="3.60.15.10:FF:000009">
    <property type="entry name" value="Anaerobic nitric oxide reductase flavorubredoxin"/>
    <property type="match status" value="1"/>
</dbReference>
<dbReference type="Gene3D" id="2.20.28.10">
    <property type="match status" value="1"/>
</dbReference>
<dbReference type="Gene3D" id="3.40.50.360">
    <property type="match status" value="1"/>
</dbReference>
<dbReference type="Gene3D" id="3.60.15.10">
    <property type="entry name" value="Ribonuclease Z/Hydroxyacylglutathione hydrolase-like"/>
    <property type="match status" value="1"/>
</dbReference>
<dbReference type="HAMAP" id="MF_01312">
    <property type="entry name" value="NorV"/>
    <property type="match status" value="1"/>
</dbReference>
<dbReference type="InterPro" id="IPR023957">
    <property type="entry name" value="Anaer_NO_rdtase_flvorubredoxin"/>
</dbReference>
<dbReference type="InterPro" id="IPR008254">
    <property type="entry name" value="Flavodoxin/NO_synth"/>
</dbReference>
<dbReference type="InterPro" id="IPR029039">
    <property type="entry name" value="Flavoprotein-like_sf"/>
</dbReference>
<dbReference type="InterPro" id="IPR001279">
    <property type="entry name" value="Metallo-B-lactamas"/>
</dbReference>
<dbReference type="InterPro" id="IPR045761">
    <property type="entry name" value="ODP_dom"/>
</dbReference>
<dbReference type="InterPro" id="IPR036866">
    <property type="entry name" value="RibonucZ/Hydroxyglut_hydro"/>
</dbReference>
<dbReference type="InterPro" id="IPR024934">
    <property type="entry name" value="Rubredoxin-like_dom"/>
</dbReference>
<dbReference type="InterPro" id="IPR016440">
    <property type="entry name" value="Rubredoxin-O_OxRdtase"/>
</dbReference>
<dbReference type="InterPro" id="IPR024935">
    <property type="entry name" value="Rubredoxin_dom"/>
</dbReference>
<dbReference type="NCBIfam" id="NF003954">
    <property type="entry name" value="PRK05452.1"/>
    <property type="match status" value="1"/>
</dbReference>
<dbReference type="PANTHER" id="PTHR43717">
    <property type="entry name" value="ANAEROBIC NITRIC OXIDE REDUCTASE FLAVORUBREDOXIN"/>
    <property type="match status" value="1"/>
</dbReference>
<dbReference type="PANTHER" id="PTHR43717:SF1">
    <property type="entry name" value="ANAEROBIC NITRIC OXIDE REDUCTASE FLAVORUBREDOXIN"/>
    <property type="match status" value="1"/>
</dbReference>
<dbReference type="Pfam" id="PF00258">
    <property type="entry name" value="Flavodoxin_1"/>
    <property type="match status" value="1"/>
</dbReference>
<dbReference type="Pfam" id="PF19583">
    <property type="entry name" value="ODP"/>
    <property type="match status" value="1"/>
</dbReference>
<dbReference type="Pfam" id="PF00301">
    <property type="entry name" value="Rubredoxin"/>
    <property type="match status" value="1"/>
</dbReference>
<dbReference type="PIRSF" id="PIRSF005243">
    <property type="entry name" value="ROO"/>
    <property type="match status" value="1"/>
</dbReference>
<dbReference type="PRINTS" id="PR00163">
    <property type="entry name" value="RUBREDOXIN"/>
</dbReference>
<dbReference type="SMART" id="SM00849">
    <property type="entry name" value="Lactamase_B"/>
    <property type="match status" value="1"/>
</dbReference>
<dbReference type="SUPFAM" id="SSF52218">
    <property type="entry name" value="Flavoproteins"/>
    <property type="match status" value="1"/>
</dbReference>
<dbReference type="SUPFAM" id="SSF56281">
    <property type="entry name" value="Metallo-hydrolase/oxidoreductase"/>
    <property type="match status" value="1"/>
</dbReference>
<dbReference type="SUPFAM" id="SSF57802">
    <property type="entry name" value="Rubredoxin-like"/>
    <property type="match status" value="1"/>
</dbReference>
<dbReference type="PROSITE" id="PS50902">
    <property type="entry name" value="FLAVODOXIN_LIKE"/>
    <property type="match status" value="1"/>
</dbReference>
<dbReference type="PROSITE" id="PS50903">
    <property type="entry name" value="RUBREDOXIN_LIKE"/>
    <property type="match status" value="1"/>
</dbReference>
<name>NORV_ECOSM</name>
<organism>
    <name type="scientific">Escherichia coli (strain SMS-3-5 / SECEC)</name>
    <dbReference type="NCBI Taxonomy" id="439855"/>
    <lineage>
        <taxon>Bacteria</taxon>
        <taxon>Pseudomonadati</taxon>
        <taxon>Pseudomonadota</taxon>
        <taxon>Gammaproteobacteria</taxon>
        <taxon>Enterobacterales</taxon>
        <taxon>Enterobacteriaceae</taxon>
        <taxon>Escherichia</taxon>
    </lineage>
</organism>
<accession>B1LQ28</accession>
<gene>
    <name evidence="1" type="primary">norV</name>
    <name evidence="1" type="synonym">flrD</name>
    <name type="ordered locus">EcSMS35_2833</name>
</gene>
<protein>
    <recommendedName>
        <fullName evidence="1">Anaerobic nitric oxide reductase flavorubredoxin</fullName>
        <shortName evidence="1">FlRd</shortName>
        <shortName evidence="1">FlavoRb</shortName>
    </recommendedName>
</protein>